<reference key="1">
    <citation type="journal article" date="2009" name="J. Bacteriol.">
        <title>Complete genome sequence of Macrococcus caseolyticus strain JCSCS5402, reflecting the ancestral genome of the human-pathogenic staphylococci.</title>
        <authorList>
            <person name="Baba T."/>
            <person name="Kuwahara-Arai K."/>
            <person name="Uchiyama I."/>
            <person name="Takeuchi F."/>
            <person name="Ito T."/>
            <person name="Hiramatsu K."/>
        </authorList>
    </citation>
    <scope>NUCLEOTIDE SEQUENCE [LARGE SCALE GENOMIC DNA]</scope>
    <source>
        <strain>JCSC5402</strain>
    </source>
</reference>
<feature type="chain" id="PRO_1000193265" description="Ribosome-binding factor A">
    <location>
        <begin position="1"/>
        <end position="114"/>
    </location>
</feature>
<name>RBFA_MACCJ</name>
<sequence length="114" mass="13071">MSLRSERVGEQLKKEISEIINQKLKNPNVGFVTVTEVEVTGDLSLASVYVTVLGEEKERKKSLEGLEKSKGFIKSEIAHRMDLRIVPDLKFKYDESIDYGNKIERMIAELNRDK</sequence>
<dbReference type="EMBL" id="AP009484">
    <property type="protein sequence ID" value="BAH17568.1"/>
    <property type="molecule type" value="Genomic_DNA"/>
</dbReference>
<dbReference type="RefSeq" id="WP_012656768.1">
    <property type="nucleotide sequence ID" value="NC_011999.1"/>
</dbReference>
<dbReference type="SMR" id="B9EBF7"/>
<dbReference type="STRING" id="458233.MCCL_0861"/>
<dbReference type="GeneID" id="61129231"/>
<dbReference type="KEGG" id="mcl:MCCL_0861"/>
<dbReference type="eggNOG" id="COG0858">
    <property type="taxonomic scope" value="Bacteria"/>
</dbReference>
<dbReference type="HOGENOM" id="CLU_089475_6_3_9"/>
<dbReference type="OrthoDB" id="307788at2"/>
<dbReference type="Proteomes" id="UP000001383">
    <property type="component" value="Chromosome"/>
</dbReference>
<dbReference type="GO" id="GO:0005829">
    <property type="term" value="C:cytosol"/>
    <property type="evidence" value="ECO:0007669"/>
    <property type="project" value="TreeGrafter"/>
</dbReference>
<dbReference type="GO" id="GO:0043024">
    <property type="term" value="F:ribosomal small subunit binding"/>
    <property type="evidence" value="ECO:0007669"/>
    <property type="project" value="TreeGrafter"/>
</dbReference>
<dbReference type="GO" id="GO:0030490">
    <property type="term" value="P:maturation of SSU-rRNA"/>
    <property type="evidence" value="ECO:0007669"/>
    <property type="project" value="UniProtKB-UniRule"/>
</dbReference>
<dbReference type="FunFam" id="3.30.300.20:FF:000009">
    <property type="entry name" value="Ribosome-binding factor A"/>
    <property type="match status" value="1"/>
</dbReference>
<dbReference type="Gene3D" id="3.30.300.20">
    <property type="match status" value="1"/>
</dbReference>
<dbReference type="HAMAP" id="MF_00003">
    <property type="entry name" value="RbfA"/>
    <property type="match status" value="1"/>
</dbReference>
<dbReference type="InterPro" id="IPR015946">
    <property type="entry name" value="KH_dom-like_a/b"/>
</dbReference>
<dbReference type="InterPro" id="IPR000238">
    <property type="entry name" value="RbfA"/>
</dbReference>
<dbReference type="InterPro" id="IPR023799">
    <property type="entry name" value="RbfA_dom_sf"/>
</dbReference>
<dbReference type="InterPro" id="IPR020053">
    <property type="entry name" value="Ribosome-bd_factorA_CS"/>
</dbReference>
<dbReference type="NCBIfam" id="TIGR00082">
    <property type="entry name" value="rbfA"/>
    <property type="match status" value="1"/>
</dbReference>
<dbReference type="PANTHER" id="PTHR33515">
    <property type="entry name" value="RIBOSOME-BINDING FACTOR A, CHLOROPLASTIC-RELATED"/>
    <property type="match status" value="1"/>
</dbReference>
<dbReference type="PANTHER" id="PTHR33515:SF1">
    <property type="entry name" value="RIBOSOME-BINDING FACTOR A, CHLOROPLASTIC-RELATED"/>
    <property type="match status" value="1"/>
</dbReference>
<dbReference type="Pfam" id="PF02033">
    <property type="entry name" value="RBFA"/>
    <property type="match status" value="1"/>
</dbReference>
<dbReference type="SUPFAM" id="SSF89919">
    <property type="entry name" value="Ribosome-binding factor A, RbfA"/>
    <property type="match status" value="1"/>
</dbReference>
<dbReference type="PROSITE" id="PS01319">
    <property type="entry name" value="RBFA"/>
    <property type="match status" value="1"/>
</dbReference>
<comment type="function">
    <text evidence="1">One of several proteins that assist in the late maturation steps of the functional core of the 30S ribosomal subunit. Associates with free 30S ribosomal subunits (but not with 30S subunits that are part of 70S ribosomes or polysomes). Required for efficient processing of 16S rRNA. May interact with the 5'-terminal helix region of 16S rRNA.</text>
</comment>
<comment type="subunit">
    <text evidence="1">Monomer. Binds 30S ribosomal subunits, but not 50S ribosomal subunits or 70S ribosomes.</text>
</comment>
<comment type="subcellular location">
    <subcellularLocation>
        <location evidence="1">Cytoplasm</location>
    </subcellularLocation>
</comment>
<comment type="similarity">
    <text evidence="1">Belongs to the RbfA family.</text>
</comment>
<proteinExistence type="inferred from homology"/>
<evidence type="ECO:0000255" key="1">
    <source>
        <dbReference type="HAMAP-Rule" id="MF_00003"/>
    </source>
</evidence>
<keyword id="KW-0963">Cytoplasm</keyword>
<keyword id="KW-1185">Reference proteome</keyword>
<keyword id="KW-0690">Ribosome biogenesis</keyword>
<protein>
    <recommendedName>
        <fullName evidence="1">Ribosome-binding factor A</fullName>
    </recommendedName>
</protein>
<organism>
    <name type="scientific">Macrococcus caseolyticus (strain JCSC5402)</name>
    <name type="common">Macrococcoides caseolyticum</name>
    <dbReference type="NCBI Taxonomy" id="458233"/>
    <lineage>
        <taxon>Bacteria</taxon>
        <taxon>Bacillati</taxon>
        <taxon>Bacillota</taxon>
        <taxon>Bacilli</taxon>
        <taxon>Bacillales</taxon>
        <taxon>Staphylococcaceae</taxon>
        <taxon>Macrococcoides</taxon>
    </lineage>
</organism>
<accession>B9EBF7</accession>
<gene>
    <name evidence="1" type="primary">rbfA</name>
    <name type="ordered locus">MCCL_0861</name>
</gene>